<proteinExistence type="inferred from homology"/>
<name>TRPB_ALISL</name>
<dbReference type="EC" id="4.2.1.20" evidence="1"/>
<dbReference type="EMBL" id="FM178379">
    <property type="protein sequence ID" value="CAQ78835.1"/>
    <property type="molecule type" value="Genomic_DNA"/>
</dbReference>
<dbReference type="RefSeq" id="WP_012549894.1">
    <property type="nucleotide sequence ID" value="NC_011312.1"/>
</dbReference>
<dbReference type="SMR" id="B6EJA3"/>
<dbReference type="KEGG" id="vsa:VSAL_I1150"/>
<dbReference type="eggNOG" id="COG0133">
    <property type="taxonomic scope" value="Bacteria"/>
</dbReference>
<dbReference type="HOGENOM" id="CLU_016734_3_1_6"/>
<dbReference type="UniPathway" id="UPA00035">
    <property type="reaction ID" value="UER00044"/>
</dbReference>
<dbReference type="Proteomes" id="UP000001730">
    <property type="component" value="Chromosome 1"/>
</dbReference>
<dbReference type="GO" id="GO:0005737">
    <property type="term" value="C:cytoplasm"/>
    <property type="evidence" value="ECO:0007669"/>
    <property type="project" value="TreeGrafter"/>
</dbReference>
<dbReference type="GO" id="GO:0004834">
    <property type="term" value="F:tryptophan synthase activity"/>
    <property type="evidence" value="ECO:0007669"/>
    <property type="project" value="UniProtKB-UniRule"/>
</dbReference>
<dbReference type="CDD" id="cd06446">
    <property type="entry name" value="Trp-synth_B"/>
    <property type="match status" value="1"/>
</dbReference>
<dbReference type="FunFam" id="3.40.50.1100:FF:000001">
    <property type="entry name" value="Tryptophan synthase beta chain"/>
    <property type="match status" value="1"/>
</dbReference>
<dbReference type="FunFam" id="3.40.50.1100:FF:000004">
    <property type="entry name" value="Tryptophan synthase beta chain"/>
    <property type="match status" value="1"/>
</dbReference>
<dbReference type="Gene3D" id="3.40.50.1100">
    <property type="match status" value="2"/>
</dbReference>
<dbReference type="HAMAP" id="MF_00133">
    <property type="entry name" value="Trp_synth_beta"/>
    <property type="match status" value="1"/>
</dbReference>
<dbReference type="InterPro" id="IPR006653">
    <property type="entry name" value="Trp_synth_b_CS"/>
</dbReference>
<dbReference type="InterPro" id="IPR006654">
    <property type="entry name" value="Trp_synth_beta"/>
</dbReference>
<dbReference type="InterPro" id="IPR023026">
    <property type="entry name" value="Trp_synth_beta/beta-like"/>
</dbReference>
<dbReference type="InterPro" id="IPR001926">
    <property type="entry name" value="TrpB-like_PALP"/>
</dbReference>
<dbReference type="InterPro" id="IPR036052">
    <property type="entry name" value="TrpB-like_PALP_sf"/>
</dbReference>
<dbReference type="NCBIfam" id="TIGR00263">
    <property type="entry name" value="trpB"/>
    <property type="match status" value="1"/>
</dbReference>
<dbReference type="PANTHER" id="PTHR48077:SF3">
    <property type="entry name" value="TRYPTOPHAN SYNTHASE"/>
    <property type="match status" value="1"/>
</dbReference>
<dbReference type="PANTHER" id="PTHR48077">
    <property type="entry name" value="TRYPTOPHAN SYNTHASE-RELATED"/>
    <property type="match status" value="1"/>
</dbReference>
<dbReference type="Pfam" id="PF00291">
    <property type="entry name" value="PALP"/>
    <property type="match status" value="1"/>
</dbReference>
<dbReference type="PIRSF" id="PIRSF001413">
    <property type="entry name" value="Trp_syn_beta"/>
    <property type="match status" value="1"/>
</dbReference>
<dbReference type="SUPFAM" id="SSF53686">
    <property type="entry name" value="Tryptophan synthase beta subunit-like PLP-dependent enzymes"/>
    <property type="match status" value="1"/>
</dbReference>
<dbReference type="PROSITE" id="PS00168">
    <property type="entry name" value="TRP_SYNTHASE_BETA"/>
    <property type="match status" value="1"/>
</dbReference>
<protein>
    <recommendedName>
        <fullName evidence="1">Tryptophan synthase beta chain</fullName>
        <ecNumber evidence="1">4.2.1.20</ecNumber>
    </recommendedName>
</protein>
<sequence length="396" mass="42927">MAKLDAYFGEYGGQYVPQILVPALDQLEQAFIDAQADEDFRAEFMTLLQEYAGRPTALTLCRNLTKGTKTKLYLKREDLLHGGAHKTNQVLGQALLALRMGKKEIIAETGAGQHGVATALACALLGLKCRVYMGAKDIERQSPNVFRMELMGAEVIPVHSGSATLKDACNEALRDWSATYETAHYLLGTAAGPHPFPTIVREFQRMIGEETKMQILAREGRLPDAVIACVGGGSNAIGMFADFIKEENVRLIGVEPAGKGIDTDQHGAPLKHGKTGIFFGMKAPLMQDEHGQIEESYSVSAGLDFPSVGPQHAHLNSIGRAEYGSVTDDEALEAFQILAKGEGIIPALESSHALAYALQMAHSEPEKEQLLVVNLSGRGDKDIFTVHDILKEKGEI</sequence>
<comment type="function">
    <text evidence="1">The beta subunit is responsible for the synthesis of L-tryptophan from indole and L-serine.</text>
</comment>
<comment type="catalytic activity">
    <reaction evidence="1">
        <text>(1S,2R)-1-C-(indol-3-yl)glycerol 3-phosphate + L-serine = D-glyceraldehyde 3-phosphate + L-tryptophan + H2O</text>
        <dbReference type="Rhea" id="RHEA:10532"/>
        <dbReference type="ChEBI" id="CHEBI:15377"/>
        <dbReference type="ChEBI" id="CHEBI:33384"/>
        <dbReference type="ChEBI" id="CHEBI:57912"/>
        <dbReference type="ChEBI" id="CHEBI:58866"/>
        <dbReference type="ChEBI" id="CHEBI:59776"/>
        <dbReference type="EC" id="4.2.1.20"/>
    </reaction>
</comment>
<comment type="cofactor">
    <cofactor evidence="1">
        <name>pyridoxal 5'-phosphate</name>
        <dbReference type="ChEBI" id="CHEBI:597326"/>
    </cofactor>
</comment>
<comment type="pathway">
    <text evidence="1">Amino-acid biosynthesis; L-tryptophan biosynthesis; L-tryptophan from chorismate: step 5/5.</text>
</comment>
<comment type="subunit">
    <text evidence="1">Tetramer of two alpha and two beta chains.</text>
</comment>
<comment type="similarity">
    <text evidence="1">Belongs to the TrpB family.</text>
</comment>
<reference key="1">
    <citation type="journal article" date="2008" name="BMC Genomics">
        <title>The genome sequence of the fish pathogen Aliivibrio salmonicida strain LFI1238 shows extensive evidence of gene decay.</title>
        <authorList>
            <person name="Hjerde E."/>
            <person name="Lorentzen M.S."/>
            <person name="Holden M.T."/>
            <person name="Seeger K."/>
            <person name="Paulsen S."/>
            <person name="Bason N."/>
            <person name="Churcher C."/>
            <person name="Harris D."/>
            <person name="Norbertczak H."/>
            <person name="Quail M.A."/>
            <person name="Sanders S."/>
            <person name="Thurston S."/>
            <person name="Parkhill J."/>
            <person name="Willassen N.P."/>
            <person name="Thomson N.R."/>
        </authorList>
    </citation>
    <scope>NUCLEOTIDE SEQUENCE [LARGE SCALE GENOMIC DNA]</scope>
    <source>
        <strain>LFI1238</strain>
    </source>
</reference>
<evidence type="ECO:0000255" key="1">
    <source>
        <dbReference type="HAMAP-Rule" id="MF_00133"/>
    </source>
</evidence>
<keyword id="KW-0028">Amino-acid biosynthesis</keyword>
<keyword id="KW-0057">Aromatic amino acid biosynthesis</keyword>
<keyword id="KW-0456">Lyase</keyword>
<keyword id="KW-0663">Pyridoxal phosphate</keyword>
<keyword id="KW-0822">Tryptophan biosynthesis</keyword>
<organism>
    <name type="scientific">Aliivibrio salmonicida (strain LFI1238)</name>
    <name type="common">Vibrio salmonicida (strain LFI1238)</name>
    <dbReference type="NCBI Taxonomy" id="316275"/>
    <lineage>
        <taxon>Bacteria</taxon>
        <taxon>Pseudomonadati</taxon>
        <taxon>Pseudomonadota</taxon>
        <taxon>Gammaproteobacteria</taxon>
        <taxon>Vibrionales</taxon>
        <taxon>Vibrionaceae</taxon>
        <taxon>Aliivibrio</taxon>
    </lineage>
</organism>
<accession>B6EJA3</accession>
<gene>
    <name evidence="1" type="primary">trpB</name>
    <name type="ordered locus">VSAL_I1150</name>
</gene>
<feature type="chain" id="PRO_1000095773" description="Tryptophan synthase beta chain">
    <location>
        <begin position="1"/>
        <end position="396"/>
    </location>
</feature>
<feature type="modified residue" description="N6-(pyridoxal phosphate)lysine" evidence="1">
    <location>
        <position position="86"/>
    </location>
</feature>